<reference key="1">
    <citation type="journal article" date="2003" name="Proc. Natl. Acad. Sci. U.S.A.">
        <title>Complete genome sequence of Lactobacillus plantarum WCFS1.</title>
        <authorList>
            <person name="Kleerebezem M."/>
            <person name="Boekhorst J."/>
            <person name="van Kranenburg R."/>
            <person name="Molenaar D."/>
            <person name="Kuipers O.P."/>
            <person name="Leer R."/>
            <person name="Tarchini R."/>
            <person name="Peters S.A."/>
            <person name="Sandbrink H.M."/>
            <person name="Fiers M.W.E.J."/>
            <person name="Stiekema W."/>
            <person name="Klein Lankhorst R.M."/>
            <person name="Bron P.A."/>
            <person name="Hoffer S.M."/>
            <person name="Nierop Groot M.N."/>
            <person name="Kerkhoven R."/>
            <person name="De Vries M."/>
            <person name="Ursing B."/>
            <person name="De Vos W.M."/>
            <person name="Siezen R.J."/>
        </authorList>
    </citation>
    <scope>NUCLEOTIDE SEQUENCE [LARGE SCALE GENOMIC DNA]</scope>
    <source>
        <strain>ATCC BAA-793 / NCIMB 8826 / WCFS1</strain>
    </source>
</reference>
<reference key="2">
    <citation type="journal article" date="2012" name="J. Bacteriol.">
        <title>Complete resequencing and reannotation of the Lactobacillus plantarum WCFS1 genome.</title>
        <authorList>
            <person name="Siezen R.J."/>
            <person name="Francke C."/>
            <person name="Renckens B."/>
            <person name="Boekhorst J."/>
            <person name="Wels M."/>
            <person name="Kleerebezem M."/>
            <person name="van Hijum S.A."/>
        </authorList>
    </citation>
    <scope>NUCLEOTIDE SEQUENCE [LARGE SCALE GENOMIC DNA]</scope>
    <scope>GENOME REANNOTATION</scope>
    <source>
        <strain>ATCC BAA-793 / NCIMB 8826 / WCFS1</strain>
    </source>
</reference>
<name>SYFA_LACPL</name>
<organism>
    <name type="scientific">Lactiplantibacillus plantarum (strain ATCC BAA-793 / NCIMB 8826 / WCFS1)</name>
    <name type="common">Lactobacillus plantarum</name>
    <dbReference type="NCBI Taxonomy" id="220668"/>
    <lineage>
        <taxon>Bacteria</taxon>
        <taxon>Bacillati</taxon>
        <taxon>Bacillota</taxon>
        <taxon>Bacilli</taxon>
        <taxon>Lactobacillales</taxon>
        <taxon>Lactobacillaceae</taxon>
        <taxon>Lactiplantibacillus</taxon>
    </lineage>
</organism>
<proteinExistence type="inferred from homology"/>
<protein>
    <recommendedName>
        <fullName evidence="1">Phenylalanine--tRNA ligase alpha subunit</fullName>
        <ecNumber evidence="1">6.1.1.20</ecNumber>
    </recommendedName>
    <alternativeName>
        <fullName evidence="1">Phenylalanyl-tRNA synthetase alpha subunit</fullName>
        <shortName evidence="1">PheRS</shortName>
    </alternativeName>
</protein>
<keyword id="KW-0030">Aminoacyl-tRNA synthetase</keyword>
<keyword id="KW-0067">ATP-binding</keyword>
<keyword id="KW-0963">Cytoplasm</keyword>
<keyword id="KW-0436">Ligase</keyword>
<keyword id="KW-0460">Magnesium</keyword>
<keyword id="KW-0479">Metal-binding</keyword>
<keyword id="KW-0547">Nucleotide-binding</keyword>
<keyword id="KW-0648">Protein biosynthesis</keyword>
<keyword id="KW-1185">Reference proteome</keyword>
<comment type="catalytic activity">
    <reaction evidence="1">
        <text>tRNA(Phe) + L-phenylalanine + ATP = L-phenylalanyl-tRNA(Phe) + AMP + diphosphate + H(+)</text>
        <dbReference type="Rhea" id="RHEA:19413"/>
        <dbReference type="Rhea" id="RHEA-COMP:9668"/>
        <dbReference type="Rhea" id="RHEA-COMP:9699"/>
        <dbReference type="ChEBI" id="CHEBI:15378"/>
        <dbReference type="ChEBI" id="CHEBI:30616"/>
        <dbReference type="ChEBI" id="CHEBI:33019"/>
        <dbReference type="ChEBI" id="CHEBI:58095"/>
        <dbReference type="ChEBI" id="CHEBI:78442"/>
        <dbReference type="ChEBI" id="CHEBI:78531"/>
        <dbReference type="ChEBI" id="CHEBI:456215"/>
        <dbReference type="EC" id="6.1.1.20"/>
    </reaction>
</comment>
<comment type="cofactor">
    <cofactor evidence="1">
        <name>Mg(2+)</name>
        <dbReference type="ChEBI" id="CHEBI:18420"/>
    </cofactor>
    <text evidence="1">Binds 2 magnesium ions per tetramer.</text>
</comment>
<comment type="subunit">
    <text evidence="1">Tetramer of two alpha and two beta subunits.</text>
</comment>
<comment type="subcellular location">
    <subcellularLocation>
        <location evidence="1">Cytoplasm</location>
    </subcellularLocation>
</comment>
<comment type="similarity">
    <text evidence="1">Belongs to the class-II aminoacyl-tRNA synthetase family. Phe-tRNA synthetase alpha subunit type 1 subfamily.</text>
</comment>
<dbReference type="EC" id="6.1.1.20" evidence="1"/>
<dbReference type="EMBL" id="AL935263">
    <property type="protein sequence ID" value="CCC78877.1"/>
    <property type="molecule type" value="Genomic_DNA"/>
</dbReference>
<dbReference type="RefSeq" id="WP_003644299.1">
    <property type="nucleotide sequence ID" value="NC_004567.2"/>
</dbReference>
<dbReference type="RefSeq" id="YP_004889391.1">
    <property type="nucleotide sequence ID" value="NC_004567.2"/>
</dbReference>
<dbReference type="SMR" id="Q88WR3"/>
<dbReference type="STRING" id="220668.lp_1558"/>
<dbReference type="EnsemblBacteria" id="CCC78877">
    <property type="protein sequence ID" value="CCC78877"/>
    <property type="gene ID" value="lp_1558"/>
</dbReference>
<dbReference type="KEGG" id="lpl:lp_1558"/>
<dbReference type="PATRIC" id="fig|220668.9.peg.1311"/>
<dbReference type="eggNOG" id="COG0016">
    <property type="taxonomic scope" value="Bacteria"/>
</dbReference>
<dbReference type="HOGENOM" id="CLU_025086_0_1_9"/>
<dbReference type="OrthoDB" id="9800719at2"/>
<dbReference type="PhylomeDB" id="Q88WR3"/>
<dbReference type="Proteomes" id="UP000000432">
    <property type="component" value="Chromosome"/>
</dbReference>
<dbReference type="GO" id="GO:0005737">
    <property type="term" value="C:cytoplasm"/>
    <property type="evidence" value="ECO:0007669"/>
    <property type="project" value="UniProtKB-SubCell"/>
</dbReference>
<dbReference type="GO" id="GO:0005524">
    <property type="term" value="F:ATP binding"/>
    <property type="evidence" value="ECO:0007669"/>
    <property type="project" value="UniProtKB-UniRule"/>
</dbReference>
<dbReference type="GO" id="GO:0140096">
    <property type="term" value="F:catalytic activity, acting on a protein"/>
    <property type="evidence" value="ECO:0007669"/>
    <property type="project" value="UniProtKB-ARBA"/>
</dbReference>
<dbReference type="GO" id="GO:0000287">
    <property type="term" value="F:magnesium ion binding"/>
    <property type="evidence" value="ECO:0007669"/>
    <property type="project" value="UniProtKB-UniRule"/>
</dbReference>
<dbReference type="GO" id="GO:0004826">
    <property type="term" value="F:phenylalanine-tRNA ligase activity"/>
    <property type="evidence" value="ECO:0007669"/>
    <property type="project" value="UniProtKB-UniRule"/>
</dbReference>
<dbReference type="GO" id="GO:0016740">
    <property type="term" value="F:transferase activity"/>
    <property type="evidence" value="ECO:0007669"/>
    <property type="project" value="UniProtKB-ARBA"/>
</dbReference>
<dbReference type="GO" id="GO:0000049">
    <property type="term" value="F:tRNA binding"/>
    <property type="evidence" value="ECO:0007669"/>
    <property type="project" value="InterPro"/>
</dbReference>
<dbReference type="GO" id="GO:0006432">
    <property type="term" value="P:phenylalanyl-tRNA aminoacylation"/>
    <property type="evidence" value="ECO:0007669"/>
    <property type="project" value="UniProtKB-UniRule"/>
</dbReference>
<dbReference type="CDD" id="cd00496">
    <property type="entry name" value="PheRS_alpha_core"/>
    <property type="match status" value="1"/>
</dbReference>
<dbReference type="FunFam" id="3.30.930.10:FF:000003">
    <property type="entry name" value="Phenylalanine--tRNA ligase alpha subunit"/>
    <property type="match status" value="1"/>
</dbReference>
<dbReference type="Gene3D" id="3.30.930.10">
    <property type="entry name" value="Bira Bifunctional Protein, Domain 2"/>
    <property type="match status" value="1"/>
</dbReference>
<dbReference type="HAMAP" id="MF_00281">
    <property type="entry name" value="Phe_tRNA_synth_alpha1"/>
    <property type="match status" value="1"/>
</dbReference>
<dbReference type="InterPro" id="IPR006195">
    <property type="entry name" value="aa-tRNA-synth_II"/>
</dbReference>
<dbReference type="InterPro" id="IPR045864">
    <property type="entry name" value="aa-tRNA-synth_II/BPL/LPL"/>
</dbReference>
<dbReference type="InterPro" id="IPR004188">
    <property type="entry name" value="Phe-tRNA_ligase_II_N"/>
</dbReference>
<dbReference type="InterPro" id="IPR022911">
    <property type="entry name" value="Phe_tRNA_ligase_alpha1_bac"/>
</dbReference>
<dbReference type="InterPro" id="IPR002319">
    <property type="entry name" value="Phenylalanyl-tRNA_Synthase"/>
</dbReference>
<dbReference type="InterPro" id="IPR010978">
    <property type="entry name" value="tRNA-bd_arm"/>
</dbReference>
<dbReference type="PANTHER" id="PTHR11538:SF41">
    <property type="entry name" value="PHENYLALANINE--TRNA LIGASE, MITOCHONDRIAL"/>
    <property type="match status" value="1"/>
</dbReference>
<dbReference type="PANTHER" id="PTHR11538">
    <property type="entry name" value="PHENYLALANYL-TRNA SYNTHETASE"/>
    <property type="match status" value="1"/>
</dbReference>
<dbReference type="Pfam" id="PF02912">
    <property type="entry name" value="Phe_tRNA-synt_N"/>
    <property type="match status" value="1"/>
</dbReference>
<dbReference type="Pfam" id="PF01409">
    <property type="entry name" value="tRNA-synt_2d"/>
    <property type="match status" value="1"/>
</dbReference>
<dbReference type="SUPFAM" id="SSF55681">
    <property type="entry name" value="Class II aaRS and biotin synthetases"/>
    <property type="match status" value="1"/>
</dbReference>
<dbReference type="SUPFAM" id="SSF46589">
    <property type="entry name" value="tRNA-binding arm"/>
    <property type="match status" value="1"/>
</dbReference>
<dbReference type="PROSITE" id="PS50862">
    <property type="entry name" value="AA_TRNA_LIGASE_II"/>
    <property type="match status" value="1"/>
</dbReference>
<sequence length="348" mass="39364">MSLQDRLTELRDQGLADIKSADVLKKVNQVKVDLLGKKGPITEVLRGMRDLSPEERPKVGAYANEVRDRIQAAIDERREELEQAAVNEQLAAEKLDVTLPGREVPQGQPHVITQIITELEDLFMGMGYQIVDGDEVEEDYYNFERLNLPKDHPARDMQDTFYITKDVLLRTQTSADQPRSLENHDFSKGPLKVLSPGRVYRRDTDDATHSHQFHQIEGLVVDKHITMADLKGTLILVAKTLFGDQFDVRLRPSFFPFTEPSVEADVTCFNCNGKGCAICKQTGWIEVLGAGMVHPHVLEMSGIDPEEYGGFAFGLGPDRFAMLKYGVDDIRNFYLNDVRFLSQFYKKG</sequence>
<feature type="chain" id="PRO_0000126719" description="Phenylalanine--tRNA ligase alpha subunit">
    <location>
        <begin position="1"/>
        <end position="348"/>
    </location>
</feature>
<feature type="binding site" evidence="1">
    <location>
        <position position="259"/>
    </location>
    <ligand>
        <name>Mg(2+)</name>
        <dbReference type="ChEBI" id="CHEBI:18420"/>
        <note>shared with beta subunit</note>
    </ligand>
</feature>
<evidence type="ECO:0000255" key="1">
    <source>
        <dbReference type="HAMAP-Rule" id="MF_00281"/>
    </source>
</evidence>
<accession>Q88WR3</accession>
<accession>F9UNT8</accession>
<gene>
    <name evidence="1" type="primary">pheS</name>
    <name type="ordered locus">lp_1558</name>
</gene>